<evidence type="ECO:0000250" key="1"/>
<evidence type="ECO:0000255" key="2"/>
<evidence type="ECO:0000255" key="3">
    <source>
        <dbReference type="PROSITE-ProRule" id="PRU00836"/>
    </source>
</evidence>
<evidence type="ECO:0000256" key="4">
    <source>
        <dbReference type="SAM" id="MobiDB-lite"/>
    </source>
</evidence>
<evidence type="ECO:0000305" key="5"/>
<dbReference type="EMBL" id="CM001232">
    <property type="protein sequence ID" value="EHA55633.1"/>
    <property type="molecule type" value="Genomic_DNA"/>
</dbReference>
<dbReference type="RefSeq" id="XP_003715440.1">
    <property type="nucleotide sequence ID" value="XM_003715392.1"/>
</dbReference>
<dbReference type="FunCoup" id="A4RI25">
    <property type="interactions" value="67"/>
</dbReference>
<dbReference type="STRING" id="242507.A4RI25"/>
<dbReference type="EnsemblFungi" id="MGG_07223T0">
    <property type="protein sequence ID" value="MGG_07223T0"/>
    <property type="gene ID" value="MGG_07223"/>
</dbReference>
<dbReference type="GeneID" id="2683111"/>
<dbReference type="KEGG" id="mgr:MGG_07223"/>
<dbReference type="VEuPathDB" id="FungiDB:MGG_07223"/>
<dbReference type="eggNOG" id="KOG4431">
    <property type="taxonomic scope" value="Eukaryota"/>
</dbReference>
<dbReference type="HOGENOM" id="CLU_087356_0_1_1"/>
<dbReference type="InParanoid" id="A4RI25"/>
<dbReference type="OMA" id="QRWIREL"/>
<dbReference type="OrthoDB" id="6604018at2759"/>
<dbReference type="Proteomes" id="UP000009058">
    <property type="component" value="Chromosome 2"/>
</dbReference>
<dbReference type="GO" id="GO:0031966">
    <property type="term" value="C:mitochondrial membrane"/>
    <property type="evidence" value="ECO:0007669"/>
    <property type="project" value="UniProtKB-SubCell"/>
</dbReference>
<dbReference type="GO" id="GO:0097250">
    <property type="term" value="P:mitochondrial respirasome assembly"/>
    <property type="evidence" value="ECO:0007669"/>
    <property type="project" value="TreeGrafter"/>
</dbReference>
<dbReference type="Gene3D" id="6.10.140.1320">
    <property type="match status" value="1"/>
</dbReference>
<dbReference type="InterPro" id="IPR007667">
    <property type="entry name" value="Hypoxia_induced_domain"/>
</dbReference>
<dbReference type="InterPro" id="IPR050355">
    <property type="entry name" value="RCF1"/>
</dbReference>
<dbReference type="PANTHER" id="PTHR12297:SF3">
    <property type="entry name" value="HIG1 DOMAIN FAMILY MEMBER 1A"/>
    <property type="match status" value="1"/>
</dbReference>
<dbReference type="PANTHER" id="PTHR12297">
    <property type="entry name" value="HYPOXIA-INDUCBILE GENE 1 HIG1 -RELATED"/>
    <property type="match status" value="1"/>
</dbReference>
<dbReference type="Pfam" id="PF04588">
    <property type="entry name" value="HIG_1_N"/>
    <property type="match status" value="1"/>
</dbReference>
<dbReference type="PROSITE" id="PS51503">
    <property type="entry name" value="HIG1"/>
    <property type="match status" value="1"/>
</dbReference>
<proteinExistence type="inferred from homology"/>
<comment type="function">
    <text evidence="1">Cytochrome c oxidase subunit which plays a role in assembly of respiratory supercomplexes.</text>
</comment>
<comment type="subunit">
    <text evidence="1">Associates with the respiratory chain complex III/complex IV supercomplex.</text>
</comment>
<comment type="subcellular location">
    <subcellularLocation>
        <location evidence="3">Mitochondrion membrane</location>
        <topology evidence="3">Multi-pass membrane protein</topology>
    </subcellularLocation>
</comment>
<comment type="similarity">
    <text evidence="5">Belongs to the RCF1 family.</text>
</comment>
<feature type="chain" id="PRO_0000399638" description="Respiratory supercomplex factor 1, mitochondrial">
    <location>
        <begin position="1"/>
        <end position="213"/>
    </location>
</feature>
<feature type="transmembrane region" description="Helical" evidence="3">
    <location>
        <begin position="44"/>
        <end position="63"/>
    </location>
</feature>
<feature type="transmembrane region" description="Helical" evidence="3">
    <location>
        <begin position="75"/>
        <end position="97"/>
    </location>
</feature>
<feature type="domain" description="HIG1" evidence="3">
    <location>
        <begin position="16"/>
        <end position="107"/>
    </location>
</feature>
<feature type="region of interest" description="Disordered" evidence="4">
    <location>
        <begin position="1"/>
        <end position="23"/>
    </location>
</feature>
<feature type="region of interest" description="Disordered" evidence="4">
    <location>
        <begin position="142"/>
        <end position="213"/>
    </location>
</feature>
<feature type="coiled-coil region" evidence="2">
    <location>
        <begin position="100"/>
        <end position="149"/>
    </location>
</feature>
<feature type="compositionally biased region" description="Pro residues" evidence="4">
    <location>
        <begin position="1"/>
        <end position="14"/>
    </location>
</feature>
<feature type="compositionally biased region" description="Basic and acidic residues" evidence="4">
    <location>
        <begin position="152"/>
        <end position="164"/>
    </location>
</feature>
<feature type="compositionally biased region" description="Low complexity" evidence="4">
    <location>
        <begin position="165"/>
        <end position="175"/>
    </location>
</feature>
<keyword id="KW-0175">Coiled coil</keyword>
<keyword id="KW-0472">Membrane</keyword>
<keyword id="KW-0496">Mitochondrion</keyword>
<keyword id="KW-1185">Reference proteome</keyword>
<keyword id="KW-0812">Transmembrane</keyword>
<keyword id="KW-1133">Transmembrane helix</keyword>
<sequence>MPTTGPPPPLPGDRPLPSSFDNDEDFYNENGFQKIARKLKQEPLVPLGCVLTVAAFTGAYRAMRAGDHGRVNRMFRYRIAAQGFTILAMVAGGIYYSDDRHKEREMWKAKRDADEEEKRLKWIKELEARDEEDKLAKEIMDKRRQRAAAAAAKREGRAVEDKAAEGGAAAAQDAKSSSGLSWASAPGWFGGNKNEPDANAQTNTGDAEKPSEK</sequence>
<gene>
    <name type="primary">RCF1</name>
    <name type="synonym">AIM31</name>
    <name type="ORF">MGG_07223</name>
</gene>
<name>RCF1_PYRO7</name>
<accession>A4RI25</accession>
<accession>G4MU33</accession>
<protein>
    <recommendedName>
        <fullName>Respiratory supercomplex factor 1, mitochondrial</fullName>
    </recommendedName>
</protein>
<reference key="1">
    <citation type="journal article" date="2005" name="Nature">
        <title>The genome sequence of the rice blast fungus Magnaporthe grisea.</title>
        <authorList>
            <person name="Dean R.A."/>
            <person name="Talbot N.J."/>
            <person name="Ebbole D.J."/>
            <person name="Farman M.L."/>
            <person name="Mitchell T.K."/>
            <person name="Orbach M.J."/>
            <person name="Thon M.R."/>
            <person name="Kulkarni R."/>
            <person name="Xu J.-R."/>
            <person name="Pan H."/>
            <person name="Read N.D."/>
            <person name="Lee Y.-H."/>
            <person name="Carbone I."/>
            <person name="Brown D."/>
            <person name="Oh Y.Y."/>
            <person name="Donofrio N."/>
            <person name="Jeong J.S."/>
            <person name="Soanes D.M."/>
            <person name="Djonovic S."/>
            <person name="Kolomiets E."/>
            <person name="Rehmeyer C."/>
            <person name="Li W."/>
            <person name="Harding M."/>
            <person name="Kim S."/>
            <person name="Lebrun M.-H."/>
            <person name="Bohnert H."/>
            <person name="Coughlan S."/>
            <person name="Butler J."/>
            <person name="Calvo S.E."/>
            <person name="Ma L.-J."/>
            <person name="Nicol R."/>
            <person name="Purcell S."/>
            <person name="Nusbaum C."/>
            <person name="Galagan J.E."/>
            <person name="Birren B.W."/>
        </authorList>
    </citation>
    <scope>NUCLEOTIDE SEQUENCE [LARGE SCALE GENOMIC DNA]</scope>
    <source>
        <strain>70-15 / ATCC MYA-4617 / FGSC 8958</strain>
    </source>
</reference>
<organism>
    <name type="scientific">Pyricularia oryzae (strain 70-15 / ATCC MYA-4617 / FGSC 8958)</name>
    <name type="common">Rice blast fungus</name>
    <name type="synonym">Magnaporthe oryzae</name>
    <dbReference type="NCBI Taxonomy" id="242507"/>
    <lineage>
        <taxon>Eukaryota</taxon>
        <taxon>Fungi</taxon>
        <taxon>Dikarya</taxon>
        <taxon>Ascomycota</taxon>
        <taxon>Pezizomycotina</taxon>
        <taxon>Sordariomycetes</taxon>
        <taxon>Sordariomycetidae</taxon>
        <taxon>Magnaporthales</taxon>
        <taxon>Pyriculariaceae</taxon>
        <taxon>Pyricularia</taxon>
    </lineage>
</organism>